<keyword id="KW-0007">Acetylation</keyword>
<keyword id="KW-0963">Cytoplasm</keyword>
<keyword id="KW-0597">Phosphoprotein</keyword>
<keyword id="KW-0646">Protease inhibitor</keyword>
<keyword id="KW-1185">Reference proteome</keyword>
<keyword id="KW-0722">Serine protease inhibitor</keyword>
<name>SPB6_PONAB</name>
<dbReference type="EMBL" id="CR859854">
    <property type="protein sequence ID" value="CAH92011.1"/>
    <property type="molecule type" value="mRNA"/>
</dbReference>
<dbReference type="RefSeq" id="NP_001126167.1">
    <property type="nucleotide sequence ID" value="NM_001132695.2"/>
</dbReference>
<dbReference type="SMR" id="Q5R899"/>
<dbReference type="FunCoup" id="Q5R899">
    <property type="interactions" value="226"/>
</dbReference>
<dbReference type="STRING" id="9601.ENSPPYP00000018091"/>
<dbReference type="MEROPS" id="I04.011"/>
<dbReference type="GeneID" id="100173128"/>
<dbReference type="KEGG" id="pon:100173128"/>
<dbReference type="CTD" id="5269"/>
<dbReference type="eggNOG" id="KOG2392">
    <property type="taxonomic scope" value="Eukaryota"/>
</dbReference>
<dbReference type="InParanoid" id="Q5R899"/>
<dbReference type="OrthoDB" id="671595at2759"/>
<dbReference type="Proteomes" id="UP000001595">
    <property type="component" value="Unplaced"/>
</dbReference>
<dbReference type="GO" id="GO:0005737">
    <property type="term" value="C:cytoplasm"/>
    <property type="evidence" value="ECO:0000250"/>
    <property type="project" value="UniProtKB"/>
</dbReference>
<dbReference type="GO" id="GO:0005615">
    <property type="term" value="C:extracellular space"/>
    <property type="evidence" value="ECO:0007669"/>
    <property type="project" value="InterPro"/>
</dbReference>
<dbReference type="GO" id="GO:0004867">
    <property type="term" value="F:serine-type endopeptidase inhibitor activity"/>
    <property type="evidence" value="ECO:0007669"/>
    <property type="project" value="UniProtKB-KW"/>
</dbReference>
<dbReference type="CDD" id="cd19565">
    <property type="entry name" value="serpinB6_CAP"/>
    <property type="match status" value="1"/>
</dbReference>
<dbReference type="FunFam" id="2.30.39.10:FF:000001">
    <property type="entry name" value="Serpin family B member 2"/>
    <property type="match status" value="1"/>
</dbReference>
<dbReference type="FunFam" id="3.30.497.10:FF:000018">
    <property type="entry name" value="Serpin family B member 8"/>
    <property type="match status" value="1"/>
</dbReference>
<dbReference type="Gene3D" id="2.30.39.10">
    <property type="entry name" value="Alpha-1-antitrypsin, domain 1"/>
    <property type="match status" value="1"/>
</dbReference>
<dbReference type="Gene3D" id="3.30.497.10">
    <property type="entry name" value="Antithrombin, subunit I, domain 2"/>
    <property type="match status" value="1"/>
</dbReference>
<dbReference type="InterPro" id="IPR023795">
    <property type="entry name" value="Serpin_CS"/>
</dbReference>
<dbReference type="InterPro" id="IPR023796">
    <property type="entry name" value="Serpin_dom"/>
</dbReference>
<dbReference type="InterPro" id="IPR000215">
    <property type="entry name" value="Serpin_fam"/>
</dbReference>
<dbReference type="InterPro" id="IPR036186">
    <property type="entry name" value="Serpin_sf"/>
</dbReference>
<dbReference type="InterPro" id="IPR042178">
    <property type="entry name" value="Serpin_sf_1"/>
</dbReference>
<dbReference type="InterPro" id="IPR042185">
    <property type="entry name" value="Serpin_sf_2"/>
</dbReference>
<dbReference type="PANTHER" id="PTHR11461">
    <property type="entry name" value="SERINE PROTEASE INHIBITOR, SERPIN"/>
    <property type="match status" value="1"/>
</dbReference>
<dbReference type="PANTHER" id="PTHR11461:SF204">
    <property type="entry name" value="SERPIN B6"/>
    <property type="match status" value="1"/>
</dbReference>
<dbReference type="Pfam" id="PF00079">
    <property type="entry name" value="Serpin"/>
    <property type="match status" value="1"/>
</dbReference>
<dbReference type="SMART" id="SM00093">
    <property type="entry name" value="SERPIN"/>
    <property type="match status" value="1"/>
</dbReference>
<dbReference type="SUPFAM" id="SSF56574">
    <property type="entry name" value="Serpins"/>
    <property type="match status" value="1"/>
</dbReference>
<dbReference type="PROSITE" id="PS00284">
    <property type="entry name" value="SERPIN"/>
    <property type="match status" value="1"/>
</dbReference>
<feature type="chain" id="PRO_0000230780" description="Serpin B6">
    <location>
        <begin position="1"/>
        <end position="376"/>
    </location>
</feature>
<feature type="site" description="Reactive bond" evidence="1">
    <location>
        <begin position="341"/>
        <end position="342"/>
    </location>
</feature>
<feature type="modified residue" description="N-acetylmethionine" evidence="2">
    <location>
        <position position="1"/>
    </location>
</feature>
<feature type="modified residue" description="Phosphoserine" evidence="2">
    <location>
        <position position="151"/>
    </location>
</feature>
<feature type="modified residue" description="N6-acetyllysine" evidence="3">
    <location>
        <position position="195"/>
    </location>
</feature>
<sequence>MDVLAEANGTFALNLLKTLGKDNSKNVFFSPMSMSCALAMVYMGAKGNTAAQMAQVLSFNKSGSGGDIHQGFQSLLTEVNKTGTQYLLRTANRLFGEKSCDFLSSFRDSCQKFYQAEMEELDFISAVEKSRKHINTWVAEKTEGKIAELLSPGSVDPLTRLVLVNAVYFRGNWDEQFDKENTEERLFKVSKNEEKPVQMMFKQSTFKKTYIGEIFTQILVLPYVGKELNMIIMLPDETTDLRTVEKELTYEKFVEWTRLDMMDEEEVEVSLPRFKLEESYDMESVLRNLGMTDAFELGKADFSGMSQTDLSLSKVVHKSFVEVNEEGTEAAAATAAIMMMRCARFVPRFCADHPFLFFIQHSKTNGILFCGRFSSP</sequence>
<organism>
    <name type="scientific">Pongo abelii</name>
    <name type="common">Sumatran orangutan</name>
    <name type="synonym">Pongo pygmaeus abelii</name>
    <dbReference type="NCBI Taxonomy" id="9601"/>
    <lineage>
        <taxon>Eukaryota</taxon>
        <taxon>Metazoa</taxon>
        <taxon>Chordata</taxon>
        <taxon>Craniata</taxon>
        <taxon>Vertebrata</taxon>
        <taxon>Euteleostomi</taxon>
        <taxon>Mammalia</taxon>
        <taxon>Eutheria</taxon>
        <taxon>Euarchontoglires</taxon>
        <taxon>Primates</taxon>
        <taxon>Haplorrhini</taxon>
        <taxon>Catarrhini</taxon>
        <taxon>Hominidae</taxon>
        <taxon>Pongo</taxon>
    </lineage>
</organism>
<comment type="function">
    <text evidence="1">Inhibitor of cathepsin G, kallikrein-8 and thrombin. May play an important role in the inner ear in the protection against leakage of lysosomal content during stress. May be involved in the regulation of serine proteinases present in the brain or extravasated from the blood (By similarity).</text>
</comment>
<comment type="subunit">
    <text evidence="1">Forms a complex with the monomeric form of beta-tryptase.</text>
</comment>
<comment type="subcellular location">
    <subcellularLocation>
        <location evidence="1">Cytoplasm</location>
    </subcellularLocation>
</comment>
<comment type="similarity">
    <text evidence="4">Belongs to the serpin family. Ov-serpin subfamily.</text>
</comment>
<accession>Q5R899</accession>
<gene>
    <name type="primary">SERPINB6</name>
</gene>
<proteinExistence type="evidence at transcript level"/>
<protein>
    <recommendedName>
        <fullName>Serpin B6</fullName>
    </recommendedName>
</protein>
<evidence type="ECO:0000250" key="1"/>
<evidence type="ECO:0000250" key="2">
    <source>
        <dbReference type="UniProtKB" id="P35237"/>
    </source>
</evidence>
<evidence type="ECO:0000250" key="3">
    <source>
        <dbReference type="UniProtKB" id="Q60854"/>
    </source>
</evidence>
<evidence type="ECO:0000305" key="4"/>
<reference key="1">
    <citation type="submission" date="2004-11" db="EMBL/GenBank/DDBJ databases">
        <authorList>
            <consortium name="The German cDNA consortium"/>
        </authorList>
    </citation>
    <scope>NUCLEOTIDE SEQUENCE [LARGE SCALE MRNA]</scope>
    <source>
        <tissue>Heart</tissue>
    </source>
</reference>